<comment type="function">
    <text evidence="1">Catalyzes the anti-1,4-elimination of the C-3 phosphate and the C-6 proR hydrogen from 5-enolpyruvylshikimate-3-phosphate (EPSP) to yield chorismate, which is the branch point compound that serves as the starting substrate for the three terminal pathways of aromatic amino acid biosynthesis. This reaction introduces a second double bond into the aromatic ring system.</text>
</comment>
<comment type="catalytic activity">
    <reaction evidence="1">
        <text>5-O-(1-carboxyvinyl)-3-phosphoshikimate = chorismate + phosphate</text>
        <dbReference type="Rhea" id="RHEA:21020"/>
        <dbReference type="ChEBI" id="CHEBI:29748"/>
        <dbReference type="ChEBI" id="CHEBI:43474"/>
        <dbReference type="ChEBI" id="CHEBI:57701"/>
        <dbReference type="EC" id="4.2.3.5"/>
    </reaction>
</comment>
<comment type="cofactor">
    <cofactor evidence="1">
        <name>FMNH2</name>
        <dbReference type="ChEBI" id="CHEBI:57618"/>
    </cofactor>
    <text evidence="1">Reduced FMN (FMNH(2)).</text>
</comment>
<comment type="pathway">
    <text evidence="1">Metabolic intermediate biosynthesis; chorismate biosynthesis; chorismate from D-erythrose 4-phosphate and phosphoenolpyruvate: step 7/7.</text>
</comment>
<comment type="subunit">
    <text evidence="1">Homotetramer.</text>
</comment>
<comment type="similarity">
    <text evidence="1">Belongs to the chorismate synthase family.</text>
</comment>
<comment type="sequence caution" evidence="2">
    <conflict type="erroneous initiation">
        <sequence resource="EMBL-CDS" id="ABA03896"/>
    </conflict>
    <text>Extended N-terminus.</text>
</comment>
<accession>Q3SUZ5</accession>
<evidence type="ECO:0000255" key="1">
    <source>
        <dbReference type="HAMAP-Rule" id="MF_00300"/>
    </source>
</evidence>
<evidence type="ECO:0000305" key="2"/>
<keyword id="KW-0028">Amino-acid biosynthesis</keyword>
<keyword id="KW-0057">Aromatic amino acid biosynthesis</keyword>
<keyword id="KW-0274">FAD</keyword>
<keyword id="KW-0285">Flavoprotein</keyword>
<keyword id="KW-0288">FMN</keyword>
<keyword id="KW-0456">Lyase</keyword>
<keyword id="KW-0521">NADP</keyword>
<keyword id="KW-1185">Reference proteome</keyword>
<organism>
    <name type="scientific">Nitrobacter winogradskyi (strain ATCC 25391 / DSM 10237 / CIP 104748 / NCIMB 11846 / Nb-255)</name>
    <dbReference type="NCBI Taxonomy" id="323098"/>
    <lineage>
        <taxon>Bacteria</taxon>
        <taxon>Pseudomonadati</taxon>
        <taxon>Pseudomonadota</taxon>
        <taxon>Alphaproteobacteria</taxon>
        <taxon>Hyphomicrobiales</taxon>
        <taxon>Nitrobacteraceae</taxon>
        <taxon>Nitrobacter</taxon>
    </lineage>
</organism>
<dbReference type="EC" id="4.2.3.5" evidence="1"/>
<dbReference type="EMBL" id="CP000115">
    <property type="protein sequence ID" value="ABA03896.1"/>
    <property type="status" value="ALT_INIT"/>
    <property type="molecule type" value="Genomic_DNA"/>
</dbReference>
<dbReference type="RefSeq" id="WP_011313956.1">
    <property type="nucleotide sequence ID" value="NC_007406.1"/>
</dbReference>
<dbReference type="SMR" id="Q3SUZ5"/>
<dbReference type="STRING" id="323098.Nwi_0629"/>
<dbReference type="KEGG" id="nwi:Nwi_0629"/>
<dbReference type="eggNOG" id="COG0082">
    <property type="taxonomic scope" value="Bacteria"/>
</dbReference>
<dbReference type="HOGENOM" id="CLU_034547_0_0_5"/>
<dbReference type="OrthoDB" id="9771806at2"/>
<dbReference type="UniPathway" id="UPA00053">
    <property type="reaction ID" value="UER00090"/>
</dbReference>
<dbReference type="Proteomes" id="UP000002531">
    <property type="component" value="Chromosome"/>
</dbReference>
<dbReference type="GO" id="GO:0005829">
    <property type="term" value="C:cytosol"/>
    <property type="evidence" value="ECO:0007669"/>
    <property type="project" value="TreeGrafter"/>
</dbReference>
<dbReference type="GO" id="GO:0004107">
    <property type="term" value="F:chorismate synthase activity"/>
    <property type="evidence" value="ECO:0007669"/>
    <property type="project" value="UniProtKB-UniRule"/>
</dbReference>
<dbReference type="GO" id="GO:0010181">
    <property type="term" value="F:FMN binding"/>
    <property type="evidence" value="ECO:0007669"/>
    <property type="project" value="TreeGrafter"/>
</dbReference>
<dbReference type="GO" id="GO:0008652">
    <property type="term" value="P:amino acid biosynthetic process"/>
    <property type="evidence" value="ECO:0007669"/>
    <property type="project" value="UniProtKB-KW"/>
</dbReference>
<dbReference type="GO" id="GO:0009073">
    <property type="term" value="P:aromatic amino acid family biosynthetic process"/>
    <property type="evidence" value="ECO:0007669"/>
    <property type="project" value="UniProtKB-KW"/>
</dbReference>
<dbReference type="GO" id="GO:0009423">
    <property type="term" value="P:chorismate biosynthetic process"/>
    <property type="evidence" value="ECO:0007669"/>
    <property type="project" value="UniProtKB-UniRule"/>
</dbReference>
<dbReference type="CDD" id="cd07304">
    <property type="entry name" value="Chorismate_synthase"/>
    <property type="match status" value="1"/>
</dbReference>
<dbReference type="Gene3D" id="3.60.150.10">
    <property type="entry name" value="Chorismate synthase AroC"/>
    <property type="match status" value="1"/>
</dbReference>
<dbReference type="HAMAP" id="MF_00300">
    <property type="entry name" value="Chorismate_synth"/>
    <property type="match status" value="1"/>
</dbReference>
<dbReference type="InterPro" id="IPR000453">
    <property type="entry name" value="Chorismate_synth"/>
</dbReference>
<dbReference type="InterPro" id="IPR035904">
    <property type="entry name" value="Chorismate_synth_AroC_sf"/>
</dbReference>
<dbReference type="InterPro" id="IPR020541">
    <property type="entry name" value="Chorismate_synthase_CS"/>
</dbReference>
<dbReference type="NCBIfam" id="TIGR00033">
    <property type="entry name" value="aroC"/>
    <property type="match status" value="1"/>
</dbReference>
<dbReference type="NCBIfam" id="NF003793">
    <property type="entry name" value="PRK05382.1"/>
    <property type="match status" value="1"/>
</dbReference>
<dbReference type="PANTHER" id="PTHR21085">
    <property type="entry name" value="CHORISMATE SYNTHASE"/>
    <property type="match status" value="1"/>
</dbReference>
<dbReference type="PANTHER" id="PTHR21085:SF0">
    <property type="entry name" value="CHORISMATE SYNTHASE"/>
    <property type="match status" value="1"/>
</dbReference>
<dbReference type="Pfam" id="PF01264">
    <property type="entry name" value="Chorismate_synt"/>
    <property type="match status" value="1"/>
</dbReference>
<dbReference type="PIRSF" id="PIRSF001456">
    <property type="entry name" value="Chorismate_synth"/>
    <property type="match status" value="1"/>
</dbReference>
<dbReference type="SUPFAM" id="SSF103263">
    <property type="entry name" value="Chorismate synthase, AroC"/>
    <property type="match status" value="1"/>
</dbReference>
<dbReference type="PROSITE" id="PS00787">
    <property type="entry name" value="CHORISMATE_SYNTHASE_1"/>
    <property type="match status" value="1"/>
</dbReference>
<dbReference type="PROSITE" id="PS00788">
    <property type="entry name" value="CHORISMATE_SYNTHASE_2"/>
    <property type="match status" value="1"/>
</dbReference>
<dbReference type="PROSITE" id="PS00789">
    <property type="entry name" value="CHORISMATE_SYNTHASE_3"/>
    <property type="match status" value="1"/>
</dbReference>
<sequence>MSHNTFGHLFRVTTFGESHGVAIGCVVDGCPPMLPLTAEEIQRDLDRRRPGQSRFTTQRQEPDAVKILSGVMPHPGTGEQVTTGAPIGLLIENTDQRSKDYSDIKDKFRPGHADFTYEAKYGIRDYRGGGRSSARETAMRVAAGAIARKVVSGMRVRGALVQMGPHKIDRDKWDWDEIARNPFFCPDKDKAAFFESYLDGIRKSGSSIGAVIEVVADGVPAGLGAPIYAKLDGDLAAALMSINAVKGVEIGAGFGAAALTGEENADEMRSSSSDMGNHGPVFTSNHAGGILGGISTGQPIVARFAVKPTSSILSPRKTVDRNGAETDIFTRGRHDPCVGIRAVPVGEAMVACVLADHVLRHRGQVGAS</sequence>
<gene>
    <name evidence="1" type="primary">aroC</name>
    <name type="ordered locus">Nwi_0629</name>
</gene>
<reference key="1">
    <citation type="journal article" date="2006" name="Appl. Environ. Microbiol.">
        <title>Genome sequence of the chemolithoautotrophic nitrite-oxidizing bacterium Nitrobacter winogradskyi Nb-255.</title>
        <authorList>
            <person name="Starkenburg S.R."/>
            <person name="Chain P.S.G."/>
            <person name="Sayavedra-Soto L.A."/>
            <person name="Hauser L."/>
            <person name="Land M.L."/>
            <person name="Larimer F.W."/>
            <person name="Malfatti S.A."/>
            <person name="Klotz M.G."/>
            <person name="Bottomley P.J."/>
            <person name="Arp D.J."/>
            <person name="Hickey W.J."/>
        </authorList>
    </citation>
    <scope>NUCLEOTIDE SEQUENCE [LARGE SCALE GENOMIC DNA]</scope>
    <source>
        <strain>ATCC 25391 / DSM 10237 / CIP 104748 / NCIMB 11846 / Nb-255</strain>
    </source>
</reference>
<proteinExistence type="inferred from homology"/>
<feature type="chain" id="PRO_0000256307" description="Chorismate synthase">
    <location>
        <begin position="1"/>
        <end position="368"/>
    </location>
</feature>
<feature type="binding site" evidence="1">
    <location>
        <position position="48"/>
    </location>
    <ligand>
        <name>NADP(+)</name>
        <dbReference type="ChEBI" id="CHEBI:58349"/>
    </ligand>
</feature>
<feature type="binding site" evidence="1">
    <location>
        <position position="54"/>
    </location>
    <ligand>
        <name>NADP(+)</name>
        <dbReference type="ChEBI" id="CHEBI:58349"/>
    </ligand>
</feature>
<feature type="binding site" evidence="1">
    <location>
        <begin position="131"/>
        <end position="133"/>
    </location>
    <ligand>
        <name>FMN</name>
        <dbReference type="ChEBI" id="CHEBI:58210"/>
    </ligand>
</feature>
<feature type="binding site" evidence="1">
    <location>
        <begin position="243"/>
        <end position="244"/>
    </location>
    <ligand>
        <name>FMN</name>
        <dbReference type="ChEBI" id="CHEBI:58210"/>
    </ligand>
</feature>
<feature type="binding site" evidence="1">
    <location>
        <position position="292"/>
    </location>
    <ligand>
        <name>FMN</name>
        <dbReference type="ChEBI" id="CHEBI:58210"/>
    </ligand>
</feature>
<feature type="binding site" evidence="1">
    <location>
        <begin position="307"/>
        <end position="311"/>
    </location>
    <ligand>
        <name>FMN</name>
        <dbReference type="ChEBI" id="CHEBI:58210"/>
    </ligand>
</feature>
<feature type="binding site" evidence="1">
    <location>
        <position position="333"/>
    </location>
    <ligand>
        <name>FMN</name>
        <dbReference type="ChEBI" id="CHEBI:58210"/>
    </ligand>
</feature>
<protein>
    <recommendedName>
        <fullName evidence="1">Chorismate synthase</fullName>
        <shortName evidence="1">CS</shortName>
        <ecNumber evidence="1">4.2.3.5</ecNumber>
    </recommendedName>
    <alternativeName>
        <fullName evidence="1">5-enolpyruvylshikimate-3-phosphate phospholyase</fullName>
    </alternativeName>
</protein>
<name>AROC_NITWN</name>